<accession>Q5L8C6</accession>
<gene>
    <name evidence="1" type="primary">rpsE</name>
    <name type="ordered locus">BF3986</name>
</gene>
<organism>
    <name type="scientific">Bacteroides fragilis (strain ATCC 25285 / DSM 2151 / CCUG 4856 / JCM 11019 / LMG 10263 / NCTC 9343 / Onslow / VPI 2553 / EN-2)</name>
    <dbReference type="NCBI Taxonomy" id="272559"/>
    <lineage>
        <taxon>Bacteria</taxon>
        <taxon>Pseudomonadati</taxon>
        <taxon>Bacteroidota</taxon>
        <taxon>Bacteroidia</taxon>
        <taxon>Bacteroidales</taxon>
        <taxon>Bacteroidaceae</taxon>
        <taxon>Bacteroides</taxon>
    </lineage>
</organism>
<comment type="function">
    <text evidence="1">With S4 and S12 plays an important role in translational accuracy.</text>
</comment>
<comment type="function">
    <text evidence="1">Located at the back of the 30S subunit body where it stabilizes the conformation of the head with respect to the body.</text>
</comment>
<comment type="subunit">
    <text evidence="1">Part of the 30S ribosomal subunit. Contacts proteins S4 and S8.</text>
</comment>
<comment type="domain">
    <text>The N-terminal domain interacts with the head of the 30S subunit; the C-terminal domain interacts with the body and contacts protein S4. The interaction surface between S4 and S5 is involved in control of translational fidelity.</text>
</comment>
<comment type="similarity">
    <text evidence="1">Belongs to the universal ribosomal protein uS5 family.</text>
</comment>
<sequence>MAGVNNRVKITNDIELKDRLVAINRVTKVTKGGRTFSFSAIVVVGNEEGIIGWGLGKAGEVTAAIAKGVESAKKNLTRVPVLKGTVPHEQSAKFGGAEVFIKPASHGTGVVAGGAMRAVLESVGVTDVLAKSKGSSNPHNLVKATIMALGEMRDARMIAQNRGISVEKVFRG</sequence>
<dbReference type="EMBL" id="CR626927">
    <property type="protein sequence ID" value="CAH09662.1"/>
    <property type="molecule type" value="Genomic_DNA"/>
</dbReference>
<dbReference type="RefSeq" id="WP_005791564.1">
    <property type="nucleotide sequence ID" value="NZ_UFTH01000001.1"/>
</dbReference>
<dbReference type="SMR" id="Q5L8C6"/>
<dbReference type="PaxDb" id="272559-BF9343_3881"/>
<dbReference type="GeneID" id="60365731"/>
<dbReference type="KEGG" id="bfs:BF9343_3881"/>
<dbReference type="eggNOG" id="COG0098">
    <property type="taxonomic scope" value="Bacteria"/>
</dbReference>
<dbReference type="HOGENOM" id="CLU_065898_2_2_10"/>
<dbReference type="Proteomes" id="UP000006731">
    <property type="component" value="Chromosome"/>
</dbReference>
<dbReference type="GO" id="GO:0015935">
    <property type="term" value="C:small ribosomal subunit"/>
    <property type="evidence" value="ECO:0007669"/>
    <property type="project" value="InterPro"/>
</dbReference>
<dbReference type="GO" id="GO:0019843">
    <property type="term" value="F:rRNA binding"/>
    <property type="evidence" value="ECO:0007669"/>
    <property type="project" value="UniProtKB-UniRule"/>
</dbReference>
<dbReference type="GO" id="GO:0003735">
    <property type="term" value="F:structural constituent of ribosome"/>
    <property type="evidence" value="ECO:0007669"/>
    <property type="project" value="InterPro"/>
</dbReference>
<dbReference type="GO" id="GO:0006412">
    <property type="term" value="P:translation"/>
    <property type="evidence" value="ECO:0007669"/>
    <property type="project" value="UniProtKB-UniRule"/>
</dbReference>
<dbReference type="FunFam" id="3.30.160.20:FF:000001">
    <property type="entry name" value="30S ribosomal protein S5"/>
    <property type="match status" value="1"/>
</dbReference>
<dbReference type="FunFam" id="3.30.230.10:FF:000002">
    <property type="entry name" value="30S ribosomal protein S5"/>
    <property type="match status" value="1"/>
</dbReference>
<dbReference type="Gene3D" id="3.30.160.20">
    <property type="match status" value="1"/>
</dbReference>
<dbReference type="Gene3D" id="3.30.230.10">
    <property type="match status" value="1"/>
</dbReference>
<dbReference type="HAMAP" id="MF_01307_B">
    <property type="entry name" value="Ribosomal_uS5_B"/>
    <property type="match status" value="1"/>
</dbReference>
<dbReference type="InterPro" id="IPR020568">
    <property type="entry name" value="Ribosomal_Su5_D2-typ_SF"/>
</dbReference>
<dbReference type="InterPro" id="IPR000851">
    <property type="entry name" value="Ribosomal_uS5"/>
</dbReference>
<dbReference type="InterPro" id="IPR005712">
    <property type="entry name" value="Ribosomal_uS5_bac-type"/>
</dbReference>
<dbReference type="InterPro" id="IPR005324">
    <property type="entry name" value="Ribosomal_uS5_C"/>
</dbReference>
<dbReference type="InterPro" id="IPR013810">
    <property type="entry name" value="Ribosomal_uS5_N"/>
</dbReference>
<dbReference type="InterPro" id="IPR018192">
    <property type="entry name" value="Ribosomal_uS5_N_CS"/>
</dbReference>
<dbReference type="InterPro" id="IPR014721">
    <property type="entry name" value="Ribsml_uS5_D2-typ_fold_subgr"/>
</dbReference>
<dbReference type="NCBIfam" id="TIGR01021">
    <property type="entry name" value="rpsE_bact"/>
    <property type="match status" value="1"/>
</dbReference>
<dbReference type="PANTHER" id="PTHR48277">
    <property type="entry name" value="MITOCHONDRIAL RIBOSOMAL PROTEIN S5"/>
    <property type="match status" value="1"/>
</dbReference>
<dbReference type="PANTHER" id="PTHR48277:SF1">
    <property type="entry name" value="MITOCHONDRIAL RIBOSOMAL PROTEIN S5"/>
    <property type="match status" value="1"/>
</dbReference>
<dbReference type="Pfam" id="PF00333">
    <property type="entry name" value="Ribosomal_S5"/>
    <property type="match status" value="1"/>
</dbReference>
<dbReference type="Pfam" id="PF03719">
    <property type="entry name" value="Ribosomal_S5_C"/>
    <property type="match status" value="1"/>
</dbReference>
<dbReference type="SUPFAM" id="SSF54768">
    <property type="entry name" value="dsRNA-binding domain-like"/>
    <property type="match status" value="1"/>
</dbReference>
<dbReference type="SUPFAM" id="SSF54211">
    <property type="entry name" value="Ribosomal protein S5 domain 2-like"/>
    <property type="match status" value="1"/>
</dbReference>
<dbReference type="PROSITE" id="PS00585">
    <property type="entry name" value="RIBOSOMAL_S5"/>
    <property type="match status" value="1"/>
</dbReference>
<dbReference type="PROSITE" id="PS50881">
    <property type="entry name" value="S5_DSRBD"/>
    <property type="match status" value="1"/>
</dbReference>
<proteinExistence type="inferred from homology"/>
<keyword id="KW-0687">Ribonucleoprotein</keyword>
<keyword id="KW-0689">Ribosomal protein</keyword>
<keyword id="KW-0694">RNA-binding</keyword>
<keyword id="KW-0699">rRNA-binding</keyword>
<protein>
    <recommendedName>
        <fullName evidence="1">Small ribosomal subunit protein uS5</fullName>
    </recommendedName>
    <alternativeName>
        <fullName evidence="2">30S ribosomal protein S5</fullName>
    </alternativeName>
</protein>
<name>RS5_BACFN</name>
<evidence type="ECO:0000255" key="1">
    <source>
        <dbReference type="HAMAP-Rule" id="MF_01307"/>
    </source>
</evidence>
<evidence type="ECO:0000305" key="2"/>
<feature type="chain" id="PRO_0000131463" description="Small ribosomal subunit protein uS5">
    <location>
        <begin position="1"/>
        <end position="172"/>
    </location>
</feature>
<feature type="domain" description="S5 DRBM" evidence="1">
    <location>
        <begin position="16"/>
        <end position="79"/>
    </location>
</feature>
<reference key="1">
    <citation type="journal article" date="2005" name="Science">
        <title>Extensive DNA inversions in the B. fragilis genome control variable gene expression.</title>
        <authorList>
            <person name="Cerdeno-Tarraga A.-M."/>
            <person name="Patrick S."/>
            <person name="Crossman L.C."/>
            <person name="Blakely G."/>
            <person name="Abratt V."/>
            <person name="Lennard N."/>
            <person name="Poxton I."/>
            <person name="Duerden B."/>
            <person name="Harris B."/>
            <person name="Quail M.A."/>
            <person name="Barron A."/>
            <person name="Clark L."/>
            <person name="Corton C."/>
            <person name="Doggett J."/>
            <person name="Holden M.T.G."/>
            <person name="Larke N."/>
            <person name="Line A."/>
            <person name="Lord A."/>
            <person name="Norbertczak H."/>
            <person name="Ormond D."/>
            <person name="Price C."/>
            <person name="Rabbinowitsch E."/>
            <person name="Woodward J."/>
            <person name="Barrell B.G."/>
            <person name="Parkhill J."/>
        </authorList>
    </citation>
    <scope>NUCLEOTIDE SEQUENCE [LARGE SCALE GENOMIC DNA]</scope>
    <source>
        <strain>ATCC 25285 / DSM 2151 / CCUG 4856 / JCM 11019 / LMG 10263 / NCTC 9343 / Onslow / VPI 2553 / EN-2</strain>
    </source>
</reference>